<comment type="function">
    <text evidence="1">Protamines substitute for histones in the chromatin of sperm during the haploid phase of spermatogenesis. They compact sperm DNA into a highly condensed, stable and inactive complex (By similarity).</text>
</comment>
<comment type="subcellular location">
    <subcellularLocation>
        <location evidence="1">Nucleus</location>
    </subcellularLocation>
    <subcellularLocation>
        <location evidence="1">Chromosome</location>
    </subcellularLocation>
</comment>
<comment type="tissue specificity">
    <text>Testis.</text>
</comment>
<comment type="similarity">
    <text evidence="3">Belongs to the protamine P1 family.</text>
</comment>
<reference key="1">
    <citation type="journal article" date="1999" name="Mol. Phylogenet. Evol.">
        <title>Systematic relationships within the dasyurid marsupial tribe Sminthopsini -- a multigene approach.</title>
        <authorList>
            <person name="Blacket M.J."/>
            <person name="Krajewski C."/>
            <person name="Labrinidis A."/>
            <person name="Cambron B."/>
            <person name="Cooper S."/>
            <person name="Westerman M."/>
        </authorList>
    </citation>
    <scope>NUCLEOTIDE SEQUENCE [GENOMIC DNA]</scope>
</reference>
<protein>
    <recommendedName>
        <fullName>Sperm protamine P1</fullName>
    </recommendedName>
</protein>
<name>HSP1_SMIAR</name>
<accession>Q71UG8</accession>
<evidence type="ECO:0000250" key="1"/>
<evidence type="ECO:0000256" key="2">
    <source>
        <dbReference type="SAM" id="MobiDB-lite"/>
    </source>
</evidence>
<evidence type="ECO:0000305" key="3"/>
<gene>
    <name type="primary">PRM1</name>
</gene>
<feature type="chain" id="PRO_0000191559" description="Sperm protamine P1">
    <location>
        <begin position="1"/>
        <end position="63"/>
    </location>
</feature>
<feature type="region of interest" description="Disordered" evidence="2">
    <location>
        <begin position="1"/>
        <end position="63"/>
    </location>
</feature>
<organism>
    <name type="scientific">Sminthopsis archeri</name>
    <name type="common">Chestnut dunnart</name>
    <dbReference type="NCBI Taxonomy" id="90756"/>
    <lineage>
        <taxon>Eukaryota</taxon>
        <taxon>Metazoa</taxon>
        <taxon>Chordata</taxon>
        <taxon>Craniata</taxon>
        <taxon>Vertebrata</taxon>
        <taxon>Euteleostomi</taxon>
        <taxon>Mammalia</taxon>
        <taxon>Metatheria</taxon>
        <taxon>Dasyuromorphia</taxon>
        <taxon>Dasyuridae</taxon>
        <taxon>Sminthopsis</taxon>
    </lineage>
</organism>
<sequence>MARYRRHSRSRSRSRYRRRRRRRSRHHNRRRTYRRSRRHSRRRRGRRRGYSRRRYSRRGRRRY</sequence>
<dbReference type="EMBL" id="AF089872">
    <property type="protein sequence ID" value="AAD55331.1"/>
    <property type="molecule type" value="Genomic_DNA"/>
</dbReference>
<dbReference type="GO" id="GO:0000786">
    <property type="term" value="C:nucleosome"/>
    <property type="evidence" value="ECO:0007669"/>
    <property type="project" value="UniProtKB-KW"/>
</dbReference>
<dbReference type="GO" id="GO:0005634">
    <property type="term" value="C:nucleus"/>
    <property type="evidence" value="ECO:0007669"/>
    <property type="project" value="UniProtKB-SubCell"/>
</dbReference>
<dbReference type="GO" id="GO:0003677">
    <property type="term" value="F:DNA binding"/>
    <property type="evidence" value="ECO:0007669"/>
    <property type="project" value="UniProtKB-KW"/>
</dbReference>
<dbReference type="GO" id="GO:0030261">
    <property type="term" value="P:chromosome condensation"/>
    <property type="evidence" value="ECO:0007669"/>
    <property type="project" value="UniProtKB-KW"/>
</dbReference>
<dbReference type="GO" id="GO:0035092">
    <property type="term" value="P:sperm DNA condensation"/>
    <property type="evidence" value="ECO:0007669"/>
    <property type="project" value="InterPro"/>
</dbReference>
<dbReference type="InterPro" id="IPR000221">
    <property type="entry name" value="Protamine_P1"/>
</dbReference>
<dbReference type="PROSITE" id="PS00048">
    <property type="entry name" value="PROTAMINE_P1"/>
    <property type="match status" value="1"/>
</dbReference>
<proteinExistence type="evidence at transcript level"/>
<keyword id="KW-0158">Chromosome</keyword>
<keyword id="KW-0217">Developmental protein</keyword>
<keyword id="KW-0221">Differentiation</keyword>
<keyword id="KW-0226">DNA condensation</keyword>
<keyword id="KW-0238">DNA-binding</keyword>
<keyword id="KW-0544">Nucleosome core</keyword>
<keyword id="KW-0539">Nucleus</keyword>
<keyword id="KW-0744">Spermatogenesis</keyword>